<accession>Q5FT88</accession>
<comment type="catalytic activity">
    <reaction evidence="1">
        <text>2 reduced [2Fe-2S]-[ferredoxin] + NADP(+) + H(+) = 2 oxidized [2Fe-2S]-[ferredoxin] + NADPH</text>
        <dbReference type="Rhea" id="RHEA:20125"/>
        <dbReference type="Rhea" id="RHEA-COMP:10000"/>
        <dbReference type="Rhea" id="RHEA-COMP:10001"/>
        <dbReference type="ChEBI" id="CHEBI:15378"/>
        <dbReference type="ChEBI" id="CHEBI:33737"/>
        <dbReference type="ChEBI" id="CHEBI:33738"/>
        <dbReference type="ChEBI" id="CHEBI:57783"/>
        <dbReference type="ChEBI" id="CHEBI:58349"/>
        <dbReference type="EC" id="1.18.1.2"/>
    </reaction>
</comment>
<comment type="cofactor">
    <cofactor evidence="1">
        <name>FAD</name>
        <dbReference type="ChEBI" id="CHEBI:57692"/>
    </cofactor>
    <text evidence="1">Binds 1 FAD per subunit.</text>
</comment>
<comment type="subunit">
    <text evidence="1">Homodimer.</text>
</comment>
<comment type="similarity">
    <text evidence="1">Belongs to the ferredoxin--NADP reductase type 2 family.</text>
</comment>
<comment type="sequence caution" evidence="2">
    <conflict type="erroneous initiation">
        <sequence resource="EMBL-CDS" id="AAW60408"/>
    </conflict>
</comment>
<gene>
    <name type="ordered locus">GOX0631</name>
</gene>
<proteinExistence type="inferred from homology"/>
<dbReference type="EC" id="1.18.1.2" evidence="1"/>
<dbReference type="EMBL" id="CP000009">
    <property type="protein sequence ID" value="AAW60408.1"/>
    <property type="status" value="ALT_INIT"/>
    <property type="molecule type" value="Genomic_DNA"/>
</dbReference>
<dbReference type="RefSeq" id="WP_024716865.1">
    <property type="nucleotide sequence ID" value="NC_006677.1"/>
</dbReference>
<dbReference type="SMR" id="Q5FT88"/>
<dbReference type="STRING" id="290633.GOX0631"/>
<dbReference type="KEGG" id="gox:GOX0631"/>
<dbReference type="eggNOG" id="COG0492">
    <property type="taxonomic scope" value="Bacteria"/>
</dbReference>
<dbReference type="HOGENOM" id="CLU_031864_5_5_5"/>
<dbReference type="Proteomes" id="UP000006375">
    <property type="component" value="Chromosome"/>
</dbReference>
<dbReference type="GO" id="GO:0004324">
    <property type="term" value="F:ferredoxin-NADP+ reductase activity"/>
    <property type="evidence" value="ECO:0007669"/>
    <property type="project" value="UniProtKB-UniRule"/>
</dbReference>
<dbReference type="GO" id="GO:0050660">
    <property type="term" value="F:flavin adenine dinucleotide binding"/>
    <property type="evidence" value="ECO:0007669"/>
    <property type="project" value="UniProtKB-UniRule"/>
</dbReference>
<dbReference type="GO" id="GO:0050661">
    <property type="term" value="F:NADP binding"/>
    <property type="evidence" value="ECO:0007669"/>
    <property type="project" value="UniProtKB-UniRule"/>
</dbReference>
<dbReference type="Gene3D" id="3.50.50.60">
    <property type="entry name" value="FAD/NAD(P)-binding domain"/>
    <property type="match status" value="2"/>
</dbReference>
<dbReference type="HAMAP" id="MF_01685">
    <property type="entry name" value="FENR2"/>
    <property type="match status" value="1"/>
</dbReference>
<dbReference type="InterPro" id="IPR036188">
    <property type="entry name" value="FAD/NAD-bd_sf"/>
</dbReference>
<dbReference type="InterPro" id="IPR023753">
    <property type="entry name" value="FAD/NAD-binding_dom"/>
</dbReference>
<dbReference type="InterPro" id="IPR022890">
    <property type="entry name" value="Fd--NADP_Rdtase_type_2"/>
</dbReference>
<dbReference type="InterPro" id="IPR050097">
    <property type="entry name" value="Ferredoxin-NADP_redctase_2"/>
</dbReference>
<dbReference type="PANTHER" id="PTHR48105">
    <property type="entry name" value="THIOREDOXIN REDUCTASE 1-RELATED-RELATED"/>
    <property type="match status" value="1"/>
</dbReference>
<dbReference type="Pfam" id="PF07992">
    <property type="entry name" value="Pyr_redox_2"/>
    <property type="match status" value="1"/>
</dbReference>
<dbReference type="PRINTS" id="PR00368">
    <property type="entry name" value="FADPNR"/>
</dbReference>
<dbReference type="PRINTS" id="PR00469">
    <property type="entry name" value="PNDRDTASEII"/>
</dbReference>
<dbReference type="SUPFAM" id="SSF51905">
    <property type="entry name" value="FAD/NAD(P)-binding domain"/>
    <property type="match status" value="1"/>
</dbReference>
<name>FENR_GLUOX</name>
<keyword id="KW-0274">FAD</keyword>
<keyword id="KW-0285">Flavoprotein</keyword>
<keyword id="KW-0521">NADP</keyword>
<keyword id="KW-0560">Oxidoreductase</keyword>
<keyword id="KW-1185">Reference proteome</keyword>
<evidence type="ECO:0000255" key="1">
    <source>
        <dbReference type="HAMAP-Rule" id="MF_01685"/>
    </source>
</evidence>
<evidence type="ECO:0000305" key="2"/>
<reference key="1">
    <citation type="journal article" date="2005" name="Nat. Biotechnol.">
        <title>Complete genome sequence of the acetic acid bacterium Gluconobacter oxydans.</title>
        <authorList>
            <person name="Prust C."/>
            <person name="Hoffmeister M."/>
            <person name="Liesegang H."/>
            <person name="Wiezer A."/>
            <person name="Fricke W.F."/>
            <person name="Ehrenreich A."/>
            <person name="Gottschalk G."/>
            <person name="Deppenmeier U."/>
        </authorList>
    </citation>
    <scope>NUCLEOTIDE SEQUENCE [LARGE SCALE GENOMIC DNA]</scope>
    <source>
        <strain>621H</strain>
    </source>
</reference>
<organism>
    <name type="scientific">Gluconobacter oxydans (strain 621H)</name>
    <name type="common">Gluconobacter suboxydans</name>
    <dbReference type="NCBI Taxonomy" id="290633"/>
    <lineage>
        <taxon>Bacteria</taxon>
        <taxon>Pseudomonadati</taxon>
        <taxon>Pseudomonadota</taxon>
        <taxon>Alphaproteobacteria</taxon>
        <taxon>Acetobacterales</taxon>
        <taxon>Acetobacteraceae</taxon>
        <taxon>Gluconobacter</taxon>
    </lineage>
</organism>
<sequence>MTTAPQTLNTDVAIVGAGPTALFAAFECGMLKLSCVLIDALDSVGGQCAALYPEKPIYDIPAHPAIEGGALIEALEQQIAPFDVPRLLGSRVETLEGQRGAFTLKTARGDVITAKAVIIAAGAGAFGPNRPPLDGLEAYERTGAVQYYVKKRADFTGKRVVVAGGGDSALDWALSLSEVAAQVYLLHRRDRFRGAPETLSRIEQQIAAGKIEKVVPYQLHALHGTDGVLSTVEVTTLEGTSRHIEADALLPFYGLSTDLGPIALWGLDTHRNTVPVTPATLESSTPGIFAIGDVATYPGKLKLILQGFSEGAMAAHAIHAIVHPDTALHFEYSTSKGVPG</sequence>
<feature type="chain" id="PRO_0000364843" description="Ferredoxin--NADP reductase">
    <location>
        <begin position="1"/>
        <end position="340"/>
    </location>
</feature>
<feature type="binding site" evidence="1">
    <location>
        <position position="20"/>
    </location>
    <ligand>
        <name>FAD</name>
        <dbReference type="ChEBI" id="CHEBI:57692"/>
    </ligand>
</feature>
<feature type="binding site" evidence="1">
    <location>
        <position position="39"/>
    </location>
    <ligand>
        <name>FAD</name>
        <dbReference type="ChEBI" id="CHEBI:57692"/>
    </ligand>
</feature>
<feature type="binding site" evidence="1">
    <location>
        <position position="47"/>
    </location>
    <ligand>
        <name>FAD</name>
        <dbReference type="ChEBI" id="CHEBI:57692"/>
    </ligand>
</feature>
<feature type="binding site" evidence="1">
    <location>
        <position position="52"/>
    </location>
    <ligand>
        <name>FAD</name>
        <dbReference type="ChEBI" id="CHEBI:57692"/>
    </ligand>
</feature>
<feature type="binding site" evidence="1">
    <location>
        <position position="92"/>
    </location>
    <ligand>
        <name>FAD</name>
        <dbReference type="ChEBI" id="CHEBI:57692"/>
    </ligand>
</feature>
<feature type="binding site" evidence="1">
    <location>
        <position position="126"/>
    </location>
    <ligand>
        <name>FAD</name>
        <dbReference type="ChEBI" id="CHEBI:57692"/>
    </ligand>
</feature>
<feature type="binding site" evidence="1">
    <location>
        <position position="293"/>
    </location>
    <ligand>
        <name>FAD</name>
        <dbReference type="ChEBI" id="CHEBI:57692"/>
    </ligand>
</feature>
<feature type="binding site" evidence="1">
    <location>
        <position position="334"/>
    </location>
    <ligand>
        <name>FAD</name>
        <dbReference type="ChEBI" id="CHEBI:57692"/>
    </ligand>
</feature>
<protein>
    <recommendedName>
        <fullName evidence="1">Ferredoxin--NADP reductase</fullName>
        <shortName evidence="1">FNR</shortName>
        <shortName evidence="1">Fd-NADP(+) reductase</shortName>
        <ecNumber evidence="1">1.18.1.2</ecNumber>
    </recommendedName>
</protein>